<organism>
    <name type="scientific">Mus musculus</name>
    <name type="common">Mouse</name>
    <dbReference type="NCBI Taxonomy" id="10090"/>
    <lineage>
        <taxon>Eukaryota</taxon>
        <taxon>Metazoa</taxon>
        <taxon>Chordata</taxon>
        <taxon>Craniata</taxon>
        <taxon>Vertebrata</taxon>
        <taxon>Euteleostomi</taxon>
        <taxon>Mammalia</taxon>
        <taxon>Eutheria</taxon>
        <taxon>Euarchontoglires</taxon>
        <taxon>Glires</taxon>
        <taxon>Rodentia</taxon>
        <taxon>Myomorpha</taxon>
        <taxon>Muroidea</taxon>
        <taxon>Muridae</taxon>
        <taxon>Murinae</taxon>
        <taxon>Mus</taxon>
        <taxon>Mus</taxon>
    </lineage>
</organism>
<sequence>MLWAHRKKRKAATETTEDKPLESHRANDSWIKSHFSRLSEERLPTYRYVSNNGHSPESRHGEVNTTLHVDTLTTKHGERGAALHRDSFASKQKISGSSMTKEMQRESGKSPSMEDDTWAAVAACTKEIDAKGHRVANSMLQRSTTHRRKGHAESRNISPEELKALEEVEIKLKGNFLTHHETGVAGANQSHTVYSQSRHSNQSHHSYPSHQSNQSHPVYSSYQGHHPSHLSPQSYPSYSSHQSHPGHSNHQGHSGLSSHQTHLGHSNHQGHPGHSSHQSHQGQPGHPSHQSHNLPNRRNPIYGS</sequence>
<proteinExistence type="evidence at transcript level"/>
<evidence type="ECO:0000250" key="1">
    <source>
        <dbReference type="UniProtKB" id="Q6AYN3"/>
    </source>
</evidence>
<evidence type="ECO:0000256" key="2">
    <source>
        <dbReference type="SAM" id="MobiDB-lite"/>
    </source>
</evidence>
<reference key="1">
    <citation type="journal article" date="2004" name="Genome Res.">
        <title>The status, quality, and expansion of the NIH full-length cDNA project: the Mammalian Gene Collection (MGC).</title>
        <authorList>
            <consortium name="The MGC Project Team"/>
        </authorList>
    </citation>
    <scope>NUCLEOTIDE SEQUENCE [LARGE SCALE MRNA]</scope>
    <source>
        <tissue>Testis</tissue>
    </source>
</reference>
<protein>
    <recommendedName>
        <fullName>Uncharacterized protein C10orf62 homolog</fullName>
    </recommendedName>
</protein>
<dbReference type="EMBL" id="BC049703">
    <property type="protein sequence ID" value="AAH49703.1"/>
    <property type="molecule type" value="mRNA"/>
</dbReference>
<dbReference type="CCDS" id="CCDS50438.1"/>
<dbReference type="RefSeq" id="NP_080028.1">
    <property type="nucleotide sequence ID" value="NM_025752.2"/>
</dbReference>
<dbReference type="SMR" id="Q80Y39"/>
<dbReference type="FunCoup" id="Q80Y39">
    <property type="interactions" value="3"/>
</dbReference>
<dbReference type="STRING" id="10090.ENSMUSP00000131279"/>
<dbReference type="iPTMnet" id="Q80Y39"/>
<dbReference type="PhosphoSitePlus" id="Q80Y39"/>
<dbReference type="SwissPalm" id="Q80Y39"/>
<dbReference type="PaxDb" id="10090-ENSMUSP00000131279"/>
<dbReference type="Antibodypedia" id="52145">
    <property type="antibodies" value="64 antibodies from 11 providers"/>
</dbReference>
<dbReference type="Ensembl" id="ENSMUST00000164518.4">
    <property type="protein sequence ID" value="ENSMUSP00000131279.3"/>
    <property type="gene ID" value="ENSMUSG00000090369.4"/>
</dbReference>
<dbReference type="GeneID" id="66765"/>
<dbReference type="KEGG" id="mmu:66765"/>
<dbReference type="UCSC" id="uc008hnc.2">
    <property type="organism name" value="mouse"/>
</dbReference>
<dbReference type="AGR" id="MGI:1914015"/>
<dbReference type="MGI" id="MGI:1914015">
    <property type="gene designation" value="4933411K16Rik"/>
</dbReference>
<dbReference type="VEuPathDB" id="HostDB:ENSMUSG00000090369"/>
<dbReference type="eggNOG" id="ENOG502SSB3">
    <property type="taxonomic scope" value="Eukaryota"/>
</dbReference>
<dbReference type="GeneTree" id="ENSGT00390000015820"/>
<dbReference type="HOGENOM" id="CLU_079655_0_0_1"/>
<dbReference type="InParanoid" id="Q80Y39"/>
<dbReference type="OMA" id="AKNENWI"/>
<dbReference type="OrthoDB" id="9450232at2759"/>
<dbReference type="PhylomeDB" id="Q80Y39"/>
<dbReference type="TreeFam" id="TF353569"/>
<dbReference type="BioGRID-ORCS" id="66765">
    <property type="hits" value="1 hit in 76 CRISPR screens"/>
</dbReference>
<dbReference type="PRO" id="PR:Q80Y39"/>
<dbReference type="Proteomes" id="UP000000589">
    <property type="component" value="Chromosome 19"/>
</dbReference>
<dbReference type="RNAct" id="Q80Y39">
    <property type="molecule type" value="protein"/>
</dbReference>
<dbReference type="Bgee" id="ENSMUSG00000090369">
    <property type="expression patterns" value="Expressed in testis and 29 other cell types or tissues"/>
</dbReference>
<dbReference type="InterPro" id="IPR037649">
    <property type="entry name" value="C10orf62"/>
</dbReference>
<dbReference type="PANTHER" id="PTHR23008:SF0">
    <property type="entry name" value="CHROMOSOME 10 OPEN READING FRAME 62"/>
    <property type="match status" value="1"/>
</dbReference>
<dbReference type="PANTHER" id="PTHR23008">
    <property type="entry name" value="CHROMOSOME 28 C10ORF62 HOMOLOG"/>
    <property type="match status" value="1"/>
</dbReference>
<dbReference type="Pfam" id="PF17729">
    <property type="entry name" value="DUF5569"/>
    <property type="match status" value="1"/>
</dbReference>
<feature type="chain" id="PRO_0000274242" description="Uncharacterized protein C10orf62 homolog">
    <location>
        <begin position="1"/>
        <end position="304"/>
    </location>
</feature>
<feature type="region of interest" description="Disordered" evidence="2">
    <location>
        <begin position="1"/>
        <end position="28"/>
    </location>
</feature>
<feature type="region of interest" description="Disordered" evidence="2">
    <location>
        <begin position="91"/>
        <end position="115"/>
    </location>
</feature>
<feature type="region of interest" description="Disordered" evidence="2">
    <location>
        <begin position="138"/>
        <end position="160"/>
    </location>
</feature>
<feature type="region of interest" description="Disordered" evidence="2">
    <location>
        <begin position="190"/>
        <end position="304"/>
    </location>
</feature>
<feature type="compositionally biased region" description="Basic residues" evidence="2">
    <location>
        <begin position="1"/>
        <end position="10"/>
    </location>
</feature>
<feature type="compositionally biased region" description="Basic and acidic residues" evidence="2">
    <location>
        <begin position="16"/>
        <end position="27"/>
    </location>
</feature>
<feature type="compositionally biased region" description="Polar residues" evidence="2">
    <location>
        <begin position="91"/>
        <end position="101"/>
    </location>
</feature>
<feature type="compositionally biased region" description="Basic and acidic residues" evidence="2">
    <location>
        <begin position="151"/>
        <end position="160"/>
    </location>
</feature>
<feature type="compositionally biased region" description="Low complexity" evidence="2">
    <location>
        <begin position="195"/>
        <end position="206"/>
    </location>
</feature>
<feature type="compositionally biased region" description="Polar residues" evidence="2">
    <location>
        <begin position="208"/>
        <end position="223"/>
    </location>
</feature>
<feature type="compositionally biased region" description="Low complexity" evidence="2">
    <location>
        <begin position="229"/>
        <end position="248"/>
    </location>
</feature>
<feature type="compositionally biased region" description="Polar residues" evidence="2">
    <location>
        <begin position="249"/>
        <end position="263"/>
    </location>
</feature>
<feature type="compositionally biased region" description="Low complexity" evidence="2">
    <location>
        <begin position="264"/>
        <end position="292"/>
    </location>
</feature>
<feature type="modified residue" description="Phosphoserine" evidence="1">
    <location>
        <position position="39"/>
    </location>
</feature>
<feature type="modified residue" description="Phosphoserine" evidence="1">
    <location>
        <position position="158"/>
    </location>
</feature>
<keyword id="KW-0597">Phosphoprotein</keyword>
<keyword id="KW-1185">Reference proteome</keyword>
<name>CJ062_MOUSE</name>
<accession>Q80Y39</accession>